<evidence type="ECO:0000250" key="1">
    <source>
        <dbReference type="UniProtKB" id="A2AQ07"/>
    </source>
</evidence>
<evidence type="ECO:0000250" key="2">
    <source>
        <dbReference type="UniProtKB" id="P07437"/>
    </source>
</evidence>
<evidence type="ECO:0000250" key="3">
    <source>
        <dbReference type="UniProtKB" id="P68363"/>
    </source>
</evidence>
<evidence type="ECO:0000250" key="4">
    <source>
        <dbReference type="UniProtKB" id="Q13509"/>
    </source>
</evidence>
<evidence type="ECO:0000250" key="5">
    <source>
        <dbReference type="UniProtKB" id="Q2T9S0"/>
    </source>
</evidence>
<evidence type="ECO:0000250" key="6">
    <source>
        <dbReference type="UniProtKB" id="Q71U36"/>
    </source>
</evidence>
<evidence type="ECO:0000256" key="7">
    <source>
        <dbReference type="SAM" id="MobiDB-lite"/>
    </source>
</evidence>
<evidence type="ECO:0000305" key="8"/>
<comment type="function">
    <text>Tubulin is the major constituent of microtubules, a cylinder consisting of laterally associated linear protofilaments composed of alpha- and beta-tubulin heterodimers. Microtubules grow by the addition of GTP-tubulin dimers to the microtubule end, where a stabilizing cap forms. Below the cap, tubulin dimers are in GDP-bound state, owing to GTPase activity of alpha-tubulin.</text>
</comment>
<comment type="cofactor">
    <cofactor evidence="3">
        <name>Mg(2+)</name>
        <dbReference type="ChEBI" id="CHEBI:18420"/>
    </cofactor>
</comment>
<comment type="subunit">
    <text>Dimer of alpha and beta chains. A typical microtubule is a hollow water-filled tube with an outer diameter of 25 nm and an inner diameter of 15 nM. Alpha-beta heterodimers associate head-to-tail to form protofilaments running lengthwise along the microtubule wall with the beta-tubulin subunit facing the microtubule plus end conferring a structural polarity. Microtubules usually have 13 protofilaments but different protofilament numbers can be found in some organisms and specialized cells.</text>
</comment>
<comment type="subcellular location">
    <subcellularLocation>
        <location>Cytoplasm</location>
        <location>Cytoskeleton</location>
    </subcellularLocation>
</comment>
<comment type="tissue specificity">
    <text>Highly expressed in skeletal muscle.</text>
</comment>
<comment type="domain">
    <text evidence="2">The MREI motif is common among all beta-tubulin isoforms and may be critical for tubulin autoregulation.</text>
</comment>
<comment type="PTM">
    <text evidence="1">Some glutamate residues at the C-terminus are polyglycylated, resulting in polyglycine chains on the gamma-carboxyl group. Glycylation is mainly limited to tubulin incorporated into axonemes (cilia and flagella) whereas glutamylation is prevalent in neuronal cells, centrioles, axonemes, and the mitotic spindle. Both modifications can coexist on the same protein on adjacent residues, and lowering polyglycylation levels increases polyglutamylation, and reciprocally. The precise function of polyglycylation is still unclear.</text>
</comment>
<comment type="PTM">
    <text evidence="1 6">Some glutamate residues at the C-terminus are polyglutamylated, resulting in polyglutamate chains on the gamma-carboxyl group (By similarity). Polyglutamylation plays a key role in microtubule severing by spastin (SPAST). SPAST preferentially recognizes and acts on microtubules decorated with short polyglutamate tails: severing activity by SPAST increases as the number of glutamates per tubulin rises from one to eight, but decreases beyond this glutamylation threshold (By similarity).</text>
</comment>
<comment type="similarity">
    <text evidence="8">Belongs to the tubulin family.</text>
</comment>
<sequence>MREIVHIQAGQCGNQIGAKFWEVISDEHGIDPTGSYHGDSDLQLERINVYYNEAAGNKYVPRAILVDLEPGTMDSVRSGPFGQIFRPDNFVFGQSGAGNNWAKGHYTEGAELVDSVLDVVRKESESCDCLQGFQLTHSLGGGTGSGMGTLLISKIREEYPDRIMNTFSVMPSPKVSDTVVEPYNATVSVHQLVENTDETYCIDNEALYDICFRTLKLTTPTYGDLNHLVSATMSGVTTCLRFPGQLNADLRKLAVNMVPFPRLHFFMPGFAPLTSRGSQQYRALTVPELTQQMFDSKNMMAACDPRHGRYLTVAAIFRGRMSMKEVDEQMLNVQNKNSSYFVEWIPNNVKTAVCDIPPRGLKMSATFIGNSTAIQELFKRISEQFTAMFRRKAFLHWYTGEGMDEMEFTEAESNMNDLVSEYQQYQDATADEQGEFEEEGEEDEA</sequence>
<reference key="1">
    <citation type="journal article" date="1985" name="Mol. Cell. Biol.">
        <title>Apparent gene conversion between beta-tubulin genes yields multiple regulatory pathways for a single beta-tubulin polypeptide isotype.</title>
        <authorList>
            <person name="Sullivan K.F."/>
            <person name="Lau J.T.Y."/>
            <person name="Cleveland D.W."/>
        </authorList>
    </citation>
    <scope>NUCLEOTIDE SEQUENCE [GENOMIC DNA]</scope>
</reference>
<proteinExistence type="evidence at transcript level"/>
<protein>
    <recommendedName>
        <fullName>Tubulin beta-1 chain</fullName>
    </recommendedName>
    <alternativeName>
        <fullName>Beta-tubulin class-I</fullName>
    </alternativeName>
</protein>
<name>TBB1_CHICK</name>
<keyword id="KW-0963">Cytoplasm</keyword>
<keyword id="KW-0206">Cytoskeleton</keyword>
<keyword id="KW-0342">GTP-binding</keyword>
<keyword id="KW-1017">Isopeptide bond</keyword>
<keyword id="KW-0460">Magnesium</keyword>
<keyword id="KW-0479">Metal-binding</keyword>
<keyword id="KW-0493">Microtubule</keyword>
<keyword id="KW-0547">Nucleotide-binding</keyword>
<keyword id="KW-1185">Reference proteome</keyword>
<feature type="chain" id="PRO_0000048263" description="Tubulin beta-1 chain">
    <location>
        <begin position="1"/>
        <end position="445"/>
    </location>
</feature>
<feature type="region of interest" description="Disordered" evidence="7">
    <location>
        <begin position="424"/>
        <end position="445"/>
    </location>
</feature>
<feature type="short sequence motif" description="MREI motif" evidence="2">
    <location>
        <begin position="1"/>
        <end position="4"/>
    </location>
</feature>
<feature type="compositionally biased region" description="Acidic residues" evidence="7">
    <location>
        <begin position="429"/>
        <end position="445"/>
    </location>
</feature>
<feature type="binding site" evidence="4">
    <location>
        <position position="11"/>
    </location>
    <ligand>
        <name>GTP</name>
        <dbReference type="ChEBI" id="CHEBI:37565"/>
    </ligand>
</feature>
<feature type="binding site" evidence="3">
    <location>
        <position position="69"/>
    </location>
    <ligand>
        <name>GTP</name>
        <dbReference type="ChEBI" id="CHEBI:37565"/>
    </ligand>
</feature>
<feature type="binding site" evidence="3">
    <location>
        <position position="69"/>
    </location>
    <ligand>
        <name>Mg(2+)</name>
        <dbReference type="ChEBI" id="CHEBI:18420"/>
    </ligand>
</feature>
<feature type="binding site" evidence="4">
    <location>
        <position position="138"/>
    </location>
    <ligand>
        <name>GTP</name>
        <dbReference type="ChEBI" id="CHEBI:37565"/>
    </ligand>
</feature>
<feature type="binding site" evidence="4">
    <location>
        <position position="142"/>
    </location>
    <ligand>
        <name>GTP</name>
        <dbReference type="ChEBI" id="CHEBI:37565"/>
    </ligand>
</feature>
<feature type="binding site" evidence="4">
    <location>
        <position position="143"/>
    </location>
    <ligand>
        <name>GTP</name>
        <dbReference type="ChEBI" id="CHEBI:37565"/>
    </ligand>
</feature>
<feature type="binding site" evidence="4">
    <location>
        <position position="144"/>
    </location>
    <ligand>
        <name>GTP</name>
        <dbReference type="ChEBI" id="CHEBI:37565"/>
    </ligand>
</feature>
<feature type="binding site" evidence="4">
    <location>
        <position position="204"/>
    </location>
    <ligand>
        <name>GTP</name>
        <dbReference type="ChEBI" id="CHEBI:37565"/>
    </ligand>
</feature>
<feature type="binding site" evidence="4">
    <location>
        <position position="226"/>
    </location>
    <ligand>
        <name>GTP</name>
        <dbReference type="ChEBI" id="CHEBI:37565"/>
    </ligand>
</feature>
<feature type="modified residue" description="5-glutamyl polyglutamate" evidence="5">
    <location>
        <position position="438"/>
    </location>
</feature>
<dbReference type="EMBL" id="M11442">
    <property type="protein sequence ID" value="AAA49124.1"/>
    <property type="molecule type" value="Genomic_DNA"/>
</dbReference>
<dbReference type="PIR" id="I50435">
    <property type="entry name" value="I50435"/>
</dbReference>
<dbReference type="SMR" id="P09203"/>
<dbReference type="FunCoup" id="P09203">
    <property type="interactions" value="1222"/>
</dbReference>
<dbReference type="STRING" id="9031.ENSGALP00000042274"/>
<dbReference type="PaxDb" id="9031-ENSGALP00000042274"/>
<dbReference type="VEuPathDB" id="HostDB:geneid_768337"/>
<dbReference type="eggNOG" id="KOG1375">
    <property type="taxonomic scope" value="Eukaryota"/>
</dbReference>
<dbReference type="InParanoid" id="P09203"/>
<dbReference type="Proteomes" id="UP000000539">
    <property type="component" value="Unassembled WGS sequence"/>
</dbReference>
<dbReference type="GO" id="GO:0005737">
    <property type="term" value="C:cytoplasm"/>
    <property type="evidence" value="ECO:0000318"/>
    <property type="project" value="GO_Central"/>
</dbReference>
<dbReference type="GO" id="GO:0005874">
    <property type="term" value="C:microtubule"/>
    <property type="evidence" value="ECO:0000318"/>
    <property type="project" value="GO_Central"/>
</dbReference>
<dbReference type="GO" id="GO:0005525">
    <property type="term" value="F:GTP binding"/>
    <property type="evidence" value="ECO:0000318"/>
    <property type="project" value="GO_Central"/>
</dbReference>
<dbReference type="GO" id="GO:0003924">
    <property type="term" value="F:GTPase activity"/>
    <property type="evidence" value="ECO:0007669"/>
    <property type="project" value="InterPro"/>
</dbReference>
<dbReference type="GO" id="GO:0046872">
    <property type="term" value="F:metal ion binding"/>
    <property type="evidence" value="ECO:0007669"/>
    <property type="project" value="UniProtKB-KW"/>
</dbReference>
<dbReference type="GO" id="GO:0005200">
    <property type="term" value="F:structural constituent of cytoskeleton"/>
    <property type="evidence" value="ECO:0000318"/>
    <property type="project" value="GO_Central"/>
</dbReference>
<dbReference type="GO" id="GO:0000226">
    <property type="term" value="P:microtubule cytoskeleton organization"/>
    <property type="evidence" value="ECO:0000318"/>
    <property type="project" value="GO_Central"/>
</dbReference>
<dbReference type="GO" id="GO:0000278">
    <property type="term" value="P:mitotic cell cycle"/>
    <property type="evidence" value="ECO:0000318"/>
    <property type="project" value="GO_Central"/>
</dbReference>
<dbReference type="GO" id="GO:0001764">
    <property type="term" value="P:neuron migration"/>
    <property type="evidence" value="ECO:0000318"/>
    <property type="project" value="GO_Central"/>
</dbReference>
<dbReference type="CDD" id="cd02187">
    <property type="entry name" value="beta_tubulin"/>
    <property type="match status" value="1"/>
</dbReference>
<dbReference type="FunFam" id="1.10.287.600:FF:000006">
    <property type="entry name" value="Tubulin beta chain"/>
    <property type="match status" value="1"/>
</dbReference>
<dbReference type="FunFam" id="3.30.1330.20:FF:000002">
    <property type="entry name" value="Tubulin beta chain"/>
    <property type="match status" value="1"/>
</dbReference>
<dbReference type="FunFam" id="3.40.50.1440:FF:000003">
    <property type="entry name" value="Tubulin beta chain"/>
    <property type="match status" value="1"/>
</dbReference>
<dbReference type="Gene3D" id="1.10.287.600">
    <property type="entry name" value="Helix hairpin bin"/>
    <property type="match status" value="1"/>
</dbReference>
<dbReference type="Gene3D" id="3.30.1330.20">
    <property type="entry name" value="Tubulin/FtsZ, C-terminal domain"/>
    <property type="match status" value="1"/>
</dbReference>
<dbReference type="Gene3D" id="3.40.50.1440">
    <property type="entry name" value="Tubulin/FtsZ, GTPase domain"/>
    <property type="match status" value="1"/>
</dbReference>
<dbReference type="InterPro" id="IPR013838">
    <property type="entry name" value="Beta-tubulin_BS"/>
</dbReference>
<dbReference type="InterPro" id="IPR002453">
    <property type="entry name" value="Beta_tubulin"/>
</dbReference>
<dbReference type="InterPro" id="IPR008280">
    <property type="entry name" value="Tub_FtsZ_C"/>
</dbReference>
<dbReference type="InterPro" id="IPR000217">
    <property type="entry name" value="Tubulin"/>
</dbReference>
<dbReference type="InterPro" id="IPR037103">
    <property type="entry name" value="Tubulin/FtsZ-like_C"/>
</dbReference>
<dbReference type="InterPro" id="IPR018316">
    <property type="entry name" value="Tubulin/FtsZ_2-layer-sand-dom"/>
</dbReference>
<dbReference type="InterPro" id="IPR036525">
    <property type="entry name" value="Tubulin/FtsZ_GTPase_sf"/>
</dbReference>
<dbReference type="InterPro" id="IPR023123">
    <property type="entry name" value="Tubulin_C"/>
</dbReference>
<dbReference type="InterPro" id="IPR017975">
    <property type="entry name" value="Tubulin_CS"/>
</dbReference>
<dbReference type="InterPro" id="IPR003008">
    <property type="entry name" value="Tubulin_FtsZ_GTPase"/>
</dbReference>
<dbReference type="PANTHER" id="PTHR11588">
    <property type="entry name" value="TUBULIN"/>
    <property type="match status" value="1"/>
</dbReference>
<dbReference type="Pfam" id="PF00091">
    <property type="entry name" value="Tubulin"/>
    <property type="match status" value="1"/>
</dbReference>
<dbReference type="Pfam" id="PF03953">
    <property type="entry name" value="Tubulin_C"/>
    <property type="match status" value="1"/>
</dbReference>
<dbReference type="PRINTS" id="PR01163">
    <property type="entry name" value="BETATUBULIN"/>
</dbReference>
<dbReference type="PRINTS" id="PR01161">
    <property type="entry name" value="TUBULIN"/>
</dbReference>
<dbReference type="SMART" id="SM00864">
    <property type="entry name" value="Tubulin"/>
    <property type="match status" value="1"/>
</dbReference>
<dbReference type="SMART" id="SM00865">
    <property type="entry name" value="Tubulin_C"/>
    <property type="match status" value="1"/>
</dbReference>
<dbReference type="SUPFAM" id="SSF55307">
    <property type="entry name" value="Tubulin C-terminal domain-like"/>
    <property type="match status" value="1"/>
</dbReference>
<dbReference type="SUPFAM" id="SSF52490">
    <property type="entry name" value="Tubulin nucleotide-binding domain-like"/>
    <property type="match status" value="1"/>
</dbReference>
<dbReference type="PROSITE" id="PS00227">
    <property type="entry name" value="TUBULIN"/>
    <property type="match status" value="1"/>
</dbReference>
<dbReference type="PROSITE" id="PS00228">
    <property type="entry name" value="TUBULIN_B_AUTOREG"/>
    <property type="match status" value="1"/>
</dbReference>
<accession>P09203</accession>
<accession>P02555</accession>
<organism>
    <name type="scientific">Gallus gallus</name>
    <name type="common">Chicken</name>
    <dbReference type="NCBI Taxonomy" id="9031"/>
    <lineage>
        <taxon>Eukaryota</taxon>
        <taxon>Metazoa</taxon>
        <taxon>Chordata</taxon>
        <taxon>Craniata</taxon>
        <taxon>Vertebrata</taxon>
        <taxon>Euteleostomi</taxon>
        <taxon>Archelosauria</taxon>
        <taxon>Archosauria</taxon>
        <taxon>Dinosauria</taxon>
        <taxon>Saurischia</taxon>
        <taxon>Theropoda</taxon>
        <taxon>Coelurosauria</taxon>
        <taxon>Aves</taxon>
        <taxon>Neognathae</taxon>
        <taxon>Galloanserae</taxon>
        <taxon>Galliformes</taxon>
        <taxon>Phasianidae</taxon>
        <taxon>Phasianinae</taxon>
        <taxon>Gallus</taxon>
    </lineage>
</organism>